<accession>Q6ZQN5</accession>
<protein>
    <recommendedName>
        <fullName>Forkhead box protein I2</fullName>
    </recommendedName>
</protein>
<dbReference type="EMBL" id="AL391005">
    <property type="status" value="NOT_ANNOTATED_CDS"/>
    <property type="molecule type" value="Genomic_DNA"/>
</dbReference>
<dbReference type="EMBL" id="AK128865">
    <property type="protein sequence ID" value="BAC87649.1"/>
    <property type="molecule type" value="mRNA"/>
</dbReference>
<dbReference type="CCDS" id="CCDS7655.2"/>
<dbReference type="RefSeq" id="NP_997309.2">
    <property type="nucleotide sequence ID" value="NM_207426.3"/>
</dbReference>
<dbReference type="SMR" id="Q6ZQN5"/>
<dbReference type="BioGRID" id="134424">
    <property type="interactions" value="52"/>
</dbReference>
<dbReference type="FunCoup" id="Q6ZQN5">
    <property type="interactions" value="58"/>
</dbReference>
<dbReference type="IntAct" id="Q6ZQN5">
    <property type="interactions" value="50"/>
</dbReference>
<dbReference type="MINT" id="Q6ZQN5"/>
<dbReference type="STRING" id="9606.ENSP00000373572"/>
<dbReference type="iPTMnet" id="Q6ZQN5"/>
<dbReference type="PhosphoSitePlus" id="Q6ZQN5"/>
<dbReference type="BioMuta" id="FOXI2"/>
<dbReference type="DMDM" id="182705226"/>
<dbReference type="MassIVE" id="Q6ZQN5"/>
<dbReference type="PaxDb" id="9606-ENSP00000373572"/>
<dbReference type="PeptideAtlas" id="Q6ZQN5"/>
<dbReference type="Antibodypedia" id="32477">
    <property type="antibodies" value="70 antibodies from 16 providers"/>
</dbReference>
<dbReference type="DNASU" id="399823"/>
<dbReference type="Ensembl" id="ENST00000388920.5">
    <property type="protein sequence ID" value="ENSP00000373572.4"/>
    <property type="gene ID" value="ENSG00000186766.8"/>
</dbReference>
<dbReference type="GeneID" id="399823"/>
<dbReference type="KEGG" id="hsa:399823"/>
<dbReference type="MANE-Select" id="ENST00000388920.5">
    <property type="protein sequence ID" value="ENSP00000373572.4"/>
    <property type="RefSeq nucleotide sequence ID" value="NM_207426.3"/>
    <property type="RefSeq protein sequence ID" value="NP_997309.2"/>
</dbReference>
<dbReference type="UCSC" id="uc009yas.3">
    <property type="organism name" value="human"/>
</dbReference>
<dbReference type="AGR" id="HGNC:32448"/>
<dbReference type="CTD" id="399823"/>
<dbReference type="DisGeNET" id="399823"/>
<dbReference type="GeneCards" id="FOXI2"/>
<dbReference type="HGNC" id="HGNC:32448">
    <property type="gene designation" value="FOXI2"/>
</dbReference>
<dbReference type="HPA" id="ENSG00000186766">
    <property type="expression patterns" value="Tissue enhanced (esophagus, kidney)"/>
</dbReference>
<dbReference type="neXtProt" id="NX_Q6ZQN5"/>
<dbReference type="OpenTargets" id="ENSG00000186766"/>
<dbReference type="PharmGKB" id="PA162388813"/>
<dbReference type="VEuPathDB" id="HostDB:ENSG00000186766"/>
<dbReference type="eggNOG" id="KOG2294">
    <property type="taxonomic scope" value="Eukaryota"/>
</dbReference>
<dbReference type="GeneTree" id="ENSGT00940000161176"/>
<dbReference type="HOGENOM" id="CLU_046860_1_0_1"/>
<dbReference type="InParanoid" id="Q6ZQN5"/>
<dbReference type="OMA" id="MATYCKD"/>
<dbReference type="OrthoDB" id="5954824at2759"/>
<dbReference type="PAN-GO" id="Q6ZQN5">
    <property type="GO annotations" value="5 GO annotations based on evolutionary models"/>
</dbReference>
<dbReference type="PhylomeDB" id="Q6ZQN5"/>
<dbReference type="TreeFam" id="TF316127"/>
<dbReference type="PathwayCommons" id="Q6ZQN5"/>
<dbReference type="SignaLink" id="Q6ZQN5"/>
<dbReference type="BioGRID-ORCS" id="399823">
    <property type="hits" value="9 hits in 1168 CRISPR screens"/>
</dbReference>
<dbReference type="GenomeRNAi" id="399823"/>
<dbReference type="Pharos" id="Q6ZQN5">
    <property type="development level" value="Tbio"/>
</dbReference>
<dbReference type="PRO" id="PR:Q6ZQN5"/>
<dbReference type="Proteomes" id="UP000005640">
    <property type="component" value="Chromosome 10"/>
</dbReference>
<dbReference type="RNAct" id="Q6ZQN5">
    <property type="molecule type" value="protein"/>
</dbReference>
<dbReference type="Bgee" id="ENSG00000186766">
    <property type="expression patterns" value="Expressed in primordial germ cell in gonad and 52 other cell types or tissues"/>
</dbReference>
<dbReference type="GO" id="GO:0000785">
    <property type="term" value="C:chromatin"/>
    <property type="evidence" value="ECO:0000247"/>
    <property type="project" value="NTNU_SB"/>
</dbReference>
<dbReference type="GO" id="GO:0005634">
    <property type="term" value="C:nucleus"/>
    <property type="evidence" value="ECO:0007669"/>
    <property type="project" value="UniProtKB-SubCell"/>
</dbReference>
<dbReference type="GO" id="GO:0000981">
    <property type="term" value="F:DNA-binding transcription factor activity, RNA polymerase II-specific"/>
    <property type="evidence" value="ECO:0000247"/>
    <property type="project" value="NTNU_SB"/>
</dbReference>
<dbReference type="GO" id="GO:0000978">
    <property type="term" value="F:RNA polymerase II cis-regulatory region sequence-specific DNA binding"/>
    <property type="evidence" value="ECO:0000318"/>
    <property type="project" value="GO_Central"/>
</dbReference>
<dbReference type="GO" id="GO:0009653">
    <property type="term" value="P:anatomical structure morphogenesis"/>
    <property type="evidence" value="ECO:0000318"/>
    <property type="project" value="GO_Central"/>
</dbReference>
<dbReference type="GO" id="GO:0030154">
    <property type="term" value="P:cell differentiation"/>
    <property type="evidence" value="ECO:0000318"/>
    <property type="project" value="GO_Central"/>
</dbReference>
<dbReference type="GO" id="GO:0006357">
    <property type="term" value="P:regulation of transcription by RNA polymerase II"/>
    <property type="evidence" value="ECO:0000318"/>
    <property type="project" value="GO_Central"/>
</dbReference>
<dbReference type="FunFam" id="1.10.10.10:FF:000016">
    <property type="entry name" value="Forkhead box protein I1"/>
    <property type="match status" value="1"/>
</dbReference>
<dbReference type="Gene3D" id="1.10.10.10">
    <property type="entry name" value="Winged helix-like DNA-binding domain superfamily/Winged helix DNA-binding domain"/>
    <property type="match status" value="1"/>
</dbReference>
<dbReference type="InterPro" id="IPR001766">
    <property type="entry name" value="Fork_head_dom"/>
</dbReference>
<dbReference type="InterPro" id="IPR050211">
    <property type="entry name" value="FOX_domain-containing"/>
</dbReference>
<dbReference type="InterPro" id="IPR018122">
    <property type="entry name" value="TF_fork_head_CS_1"/>
</dbReference>
<dbReference type="InterPro" id="IPR030456">
    <property type="entry name" value="TF_fork_head_CS_2"/>
</dbReference>
<dbReference type="InterPro" id="IPR036388">
    <property type="entry name" value="WH-like_DNA-bd_sf"/>
</dbReference>
<dbReference type="InterPro" id="IPR036390">
    <property type="entry name" value="WH_DNA-bd_sf"/>
</dbReference>
<dbReference type="PANTHER" id="PTHR11829">
    <property type="entry name" value="FORKHEAD BOX PROTEIN"/>
    <property type="match status" value="1"/>
</dbReference>
<dbReference type="PANTHER" id="PTHR11829:SF372">
    <property type="entry name" value="FORKHEAD BOX PROTEIN I2"/>
    <property type="match status" value="1"/>
</dbReference>
<dbReference type="Pfam" id="PF00250">
    <property type="entry name" value="Forkhead"/>
    <property type="match status" value="1"/>
</dbReference>
<dbReference type="PRINTS" id="PR00053">
    <property type="entry name" value="FORKHEAD"/>
</dbReference>
<dbReference type="SMART" id="SM00339">
    <property type="entry name" value="FH"/>
    <property type="match status" value="1"/>
</dbReference>
<dbReference type="SUPFAM" id="SSF46785">
    <property type="entry name" value="Winged helix' DNA-binding domain"/>
    <property type="match status" value="1"/>
</dbReference>
<dbReference type="PROSITE" id="PS00657">
    <property type="entry name" value="FORK_HEAD_1"/>
    <property type="match status" value="1"/>
</dbReference>
<dbReference type="PROSITE" id="PS00658">
    <property type="entry name" value="FORK_HEAD_2"/>
    <property type="match status" value="1"/>
</dbReference>
<dbReference type="PROSITE" id="PS50039">
    <property type="entry name" value="FORK_HEAD_3"/>
    <property type="match status" value="1"/>
</dbReference>
<keyword id="KW-0010">Activator</keyword>
<keyword id="KW-0238">DNA-binding</keyword>
<keyword id="KW-0539">Nucleus</keyword>
<keyword id="KW-1185">Reference proteome</keyword>
<keyword id="KW-0804">Transcription</keyword>
<keyword id="KW-0805">Transcription regulation</keyword>
<sequence length="318" mass="32979">MATYCDDLGPSSAPPGQAQATAHPPGYEPGDLGAVGGGPLLWVNAPALSPKSYASGPGPAPPYAAPSYGAPGPLLGAPGGLAGADLAWLSLSGQQELLRLVRPPYSYSALIAMAIQSAPLRKLTLSQIYQYVAGNFPFYKRSKAGWQNSIRHNLSLNDCFKKVPRDEDDPGKGNYWTLDPNCEKMFDNGNFRRKRKRRAEASAAVRSGARSVGGAEAPALEPPSAACLDLQASPSPSAPEAATCFSGFASAMSALAGGLGTFPGGLAGDFSFGRRPPTVATHAPQTLNPSPGFAPGHQTAAAGFRLSHLLYSREGTEV</sequence>
<name>FOXI2_HUMAN</name>
<evidence type="ECO:0000250" key="1"/>
<evidence type="ECO:0000255" key="2">
    <source>
        <dbReference type="PROSITE-ProRule" id="PRU00089"/>
    </source>
</evidence>
<evidence type="ECO:0000256" key="3">
    <source>
        <dbReference type="SAM" id="MobiDB-lite"/>
    </source>
</evidence>
<evidence type="ECO:0000305" key="4"/>
<reference key="1">
    <citation type="journal article" date="2004" name="Nature">
        <title>The DNA sequence and comparative analysis of human chromosome 10.</title>
        <authorList>
            <person name="Deloukas P."/>
            <person name="Earthrowl M.E."/>
            <person name="Grafham D.V."/>
            <person name="Rubenfield M."/>
            <person name="French L."/>
            <person name="Steward C.A."/>
            <person name="Sims S.K."/>
            <person name="Jones M.C."/>
            <person name="Searle S."/>
            <person name="Scott C."/>
            <person name="Howe K."/>
            <person name="Hunt S.E."/>
            <person name="Andrews T.D."/>
            <person name="Gilbert J.G.R."/>
            <person name="Swarbreck D."/>
            <person name="Ashurst J.L."/>
            <person name="Taylor A."/>
            <person name="Battles J."/>
            <person name="Bird C.P."/>
            <person name="Ainscough R."/>
            <person name="Almeida J.P."/>
            <person name="Ashwell R.I.S."/>
            <person name="Ambrose K.D."/>
            <person name="Babbage A.K."/>
            <person name="Bagguley C.L."/>
            <person name="Bailey J."/>
            <person name="Banerjee R."/>
            <person name="Bates K."/>
            <person name="Beasley H."/>
            <person name="Bray-Allen S."/>
            <person name="Brown A.J."/>
            <person name="Brown J.Y."/>
            <person name="Burford D.C."/>
            <person name="Burrill W."/>
            <person name="Burton J."/>
            <person name="Cahill P."/>
            <person name="Camire D."/>
            <person name="Carter N.P."/>
            <person name="Chapman J.C."/>
            <person name="Clark S.Y."/>
            <person name="Clarke G."/>
            <person name="Clee C.M."/>
            <person name="Clegg S."/>
            <person name="Corby N."/>
            <person name="Coulson A."/>
            <person name="Dhami P."/>
            <person name="Dutta I."/>
            <person name="Dunn M."/>
            <person name="Faulkner L."/>
            <person name="Frankish A."/>
            <person name="Frankland J.A."/>
            <person name="Garner P."/>
            <person name="Garnett J."/>
            <person name="Gribble S."/>
            <person name="Griffiths C."/>
            <person name="Grocock R."/>
            <person name="Gustafson E."/>
            <person name="Hammond S."/>
            <person name="Harley J.L."/>
            <person name="Hart E."/>
            <person name="Heath P.D."/>
            <person name="Ho T.P."/>
            <person name="Hopkins B."/>
            <person name="Horne J."/>
            <person name="Howden P.J."/>
            <person name="Huckle E."/>
            <person name="Hynds C."/>
            <person name="Johnson C."/>
            <person name="Johnson D."/>
            <person name="Kana A."/>
            <person name="Kay M."/>
            <person name="Kimberley A.M."/>
            <person name="Kershaw J.K."/>
            <person name="Kokkinaki M."/>
            <person name="Laird G.K."/>
            <person name="Lawlor S."/>
            <person name="Lee H.M."/>
            <person name="Leongamornlert D.A."/>
            <person name="Laird G."/>
            <person name="Lloyd C."/>
            <person name="Lloyd D.M."/>
            <person name="Loveland J."/>
            <person name="Lovell J."/>
            <person name="McLaren S."/>
            <person name="McLay K.E."/>
            <person name="McMurray A."/>
            <person name="Mashreghi-Mohammadi M."/>
            <person name="Matthews L."/>
            <person name="Milne S."/>
            <person name="Nickerson T."/>
            <person name="Nguyen M."/>
            <person name="Overton-Larty E."/>
            <person name="Palmer S.A."/>
            <person name="Pearce A.V."/>
            <person name="Peck A.I."/>
            <person name="Pelan S."/>
            <person name="Phillimore B."/>
            <person name="Porter K."/>
            <person name="Rice C.M."/>
            <person name="Rogosin A."/>
            <person name="Ross M.T."/>
            <person name="Sarafidou T."/>
            <person name="Sehra H.K."/>
            <person name="Shownkeen R."/>
            <person name="Skuce C.D."/>
            <person name="Smith M."/>
            <person name="Standring L."/>
            <person name="Sycamore N."/>
            <person name="Tester J."/>
            <person name="Thorpe A."/>
            <person name="Torcasso W."/>
            <person name="Tracey A."/>
            <person name="Tromans A."/>
            <person name="Tsolas J."/>
            <person name="Wall M."/>
            <person name="Walsh J."/>
            <person name="Wang H."/>
            <person name="Weinstock K."/>
            <person name="West A.P."/>
            <person name="Willey D.L."/>
            <person name="Whitehead S.L."/>
            <person name="Wilming L."/>
            <person name="Wray P.W."/>
            <person name="Young L."/>
            <person name="Chen Y."/>
            <person name="Lovering R.C."/>
            <person name="Moschonas N.K."/>
            <person name="Siebert R."/>
            <person name="Fechtel K."/>
            <person name="Bentley D."/>
            <person name="Durbin R.M."/>
            <person name="Hubbard T."/>
            <person name="Doucette-Stamm L."/>
            <person name="Beck S."/>
            <person name="Smith D.R."/>
            <person name="Rogers J."/>
        </authorList>
    </citation>
    <scope>NUCLEOTIDE SEQUENCE [LARGE SCALE GENOMIC DNA]</scope>
</reference>
<reference key="2">
    <citation type="journal article" date="2004" name="Nat. Genet.">
        <title>Complete sequencing and characterization of 21,243 full-length human cDNAs.</title>
        <authorList>
            <person name="Ota T."/>
            <person name="Suzuki Y."/>
            <person name="Nishikawa T."/>
            <person name="Otsuki T."/>
            <person name="Sugiyama T."/>
            <person name="Irie R."/>
            <person name="Wakamatsu A."/>
            <person name="Hayashi K."/>
            <person name="Sato H."/>
            <person name="Nagai K."/>
            <person name="Kimura K."/>
            <person name="Makita H."/>
            <person name="Sekine M."/>
            <person name="Obayashi M."/>
            <person name="Nishi T."/>
            <person name="Shibahara T."/>
            <person name="Tanaka T."/>
            <person name="Ishii S."/>
            <person name="Yamamoto J."/>
            <person name="Saito K."/>
            <person name="Kawai Y."/>
            <person name="Isono Y."/>
            <person name="Nakamura Y."/>
            <person name="Nagahari K."/>
            <person name="Murakami K."/>
            <person name="Yasuda T."/>
            <person name="Iwayanagi T."/>
            <person name="Wagatsuma M."/>
            <person name="Shiratori A."/>
            <person name="Sudo H."/>
            <person name="Hosoiri T."/>
            <person name="Kaku Y."/>
            <person name="Kodaira H."/>
            <person name="Kondo H."/>
            <person name="Sugawara M."/>
            <person name="Takahashi M."/>
            <person name="Kanda K."/>
            <person name="Yokoi T."/>
            <person name="Furuya T."/>
            <person name="Kikkawa E."/>
            <person name="Omura Y."/>
            <person name="Abe K."/>
            <person name="Kamihara K."/>
            <person name="Katsuta N."/>
            <person name="Sato K."/>
            <person name="Tanikawa M."/>
            <person name="Yamazaki M."/>
            <person name="Ninomiya K."/>
            <person name="Ishibashi T."/>
            <person name="Yamashita H."/>
            <person name="Murakawa K."/>
            <person name="Fujimori K."/>
            <person name="Tanai H."/>
            <person name="Kimata M."/>
            <person name="Watanabe M."/>
            <person name="Hiraoka S."/>
            <person name="Chiba Y."/>
            <person name="Ishida S."/>
            <person name="Ono Y."/>
            <person name="Takiguchi S."/>
            <person name="Watanabe S."/>
            <person name="Yosida M."/>
            <person name="Hotuta T."/>
            <person name="Kusano J."/>
            <person name="Kanehori K."/>
            <person name="Takahashi-Fujii A."/>
            <person name="Hara H."/>
            <person name="Tanase T.-O."/>
            <person name="Nomura Y."/>
            <person name="Togiya S."/>
            <person name="Komai F."/>
            <person name="Hara R."/>
            <person name="Takeuchi K."/>
            <person name="Arita M."/>
            <person name="Imose N."/>
            <person name="Musashino K."/>
            <person name="Yuuki H."/>
            <person name="Oshima A."/>
            <person name="Sasaki N."/>
            <person name="Aotsuka S."/>
            <person name="Yoshikawa Y."/>
            <person name="Matsunawa H."/>
            <person name="Ichihara T."/>
            <person name="Shiohata N."/>
            <person name="Sano S."/>
            <person name="Moriya S."/>
            <person name="Momiyama H."/>
            <person name="Satoh N."/>
            <person name="Takami S."/>
            <person name="Terashima Y."/>
            <person name="Suzuki O."/>
            <person name="Nakagawa S."/>
            <person name="Senoh A."/>
            <person name="Mizoguchi H."/>
            <person name="Goto Y."/>
            <person name="Shimizu F."/>
            <person name="Wakebe H."/>
            <person name="Hishigaki H."/>
            <person name="Watanabe T."/>
            <person name="Sugiyama A."/>
            <person name="Takemoto M."/>
            <person name="Kawakami B."/>
            <person name="Yamazaki M."/>
            <person name="Watanabe K."/>
            <person name="Kumagai A."/>
            <person name="Itakura S."/>
            <person name="Fukuzumi Y."/>
            <person name="Fujimori Y."/>
            <person name="Komiyama M."/>
            <person name="Tashiro H."/>
            <person name="Tanigami A."/>
            <person name="Fujiwara T."/>
            <person name="Ono T."/>
            <person name="Yamada K."/>
            <person name="Fujii Y."/>
            <person name="Ozaki K."/>
            <person name="Hirao M."/>
            <person name="Ohmori Y."/>
            <person name="Kawabata A."/>
            <person name="Hikiji T."/>
            <person name="Kobatake N."/>
            <person name="Inagaki H."/>
            <person name="Ikema Y."/>
            <person name="Okamoto S."/>
            <person name="Okitani R."/>
            <person name="Kawakami T."/>
            <person name="Noguchi S."/>
            <person name="Itoh T."/>
            <person name="Shigeta K."/>
            <person name="Senba T."/>
            <person name="Matsumura K."/>
            <person name="Nakajima Y."/>
            <person name="Mizuno T."/>
            <person name="Morinaga M."/>
            <person name="Sasaki M."/>
            <person name="Togashi T."/>
            <person name="Oyama M."/>
            <person name="Hata H."/>
            <person name="Watanabe M."/>
            <person name="Komatsu T."/>
            <person name="Mizushima-Sugano J."/>
            <person name="Satoh T."/>
            <person name="Shirai Y."/>
            <person name="Takahashi Y."/>
            <person name="Nakagawa K."/>
            <person name="Okumura K."/>
            <person name="Nagase T."/>
            <person name="Nomura N."/>
            <person name="Kikuchi H."/>
            <person name="Masuho Y."/>
            <person name="Yamashita R."/>
            <person name="Nakai K."/>
            <person name="Yada T."/>
            <person name="Nakamura Y."/>
            <person name="Ohara O."/>
            <person name="Isogai T."/>
            <person name="Sugano S."/>
        </authorList>
    </citation>
    <scope>NUCLEOTIDE SEQUENCE [LARGE SCALE MRNA] OF 140-318</scope>
    <source>
        <tissue>Uterus</tissue>
    </source>
</reference>
<proteinExistence type="evidence at transcript level"/>
<organism>
    <name type="scientific">Homo sapiens</name>
    <name type="common">Human</name>
    <dbReference type="NCBI Taxonomy" id="9606"/>
    <lineage>
        <taxon>Eukaryota</taxon>
        <taxon>Metazoa</taxon>
        <taxon>Chordata</taxon>
        <taxon>Craniata</taxon>
        <taxon>Vertebrata</taxon>
        <taxon>Euteleostomi</taxon>
        <taxon>Mammalia</taxon>
        <taxon>Eutheria</taxon>
        <taxon>Euarchontoglires</taxon>
        <taxon>Primates</taxon>
        <taxon>Haplorrhini</taxon>
        <taxon>Catarrhini</taxon>
        <taxon>Hominidae</taxon>
        <taxon>Homo</taxon>
    </lineage>
</organism>
<comment type="function">
    <text evidence="1">Possible transcriptional activator.</text>
</comment>
<comment type="subcellular location">
    <subcellularLocation>
        <location evidence="4">Nucleus</location>
    </subcellularLocation>
</comment>
<feature type="chain" id="PRO_0000320118" description="Forkhead box protein I2">
    <location>
        <begin position="1"/>
        <end position="318"/>
    </location>
</feature>
<feature type="DNA-binding region" description="Fork-head" evidence="2">
    <location>
        <begin position="102"/>
        <end position="196"/>
    </location>
</feature>
<feature type="region of interest" description="Disordered" evidence="3">
    <location>
        <begin position="1"/>
        <end position="30"/>
    </location>
</feature>
<gene>
    <name type="primary">FOXI2</name>
</gene>